<protein>
    <recommendedName>
        <fullName evidence="1">Thiamine-phosphate synthase</fullName>
        <shortName evidence="1">TP synthase</shortName>
        <shortName evidence="1">TPS</shortName>
        <ecNumber evidence="1">2.5.1.3</ecNumber>
    </recommendedName>
    <alternativeName>
        <fullName evidence="1">Thiamine-phosphate pyrophosphorylase</fullName>
        <shortName evidence="1">TMP pyrophosphorylase</shortName>
        <shortName evidence="1">TMP-PPase</shortName>
    </alternativeName>
</protein>
<reference key="1">
    <citation type="journal article" date="2006" name="Proc. Natl. Acad. Sci. U.S.A.">
        <title>Comparative genomics of the lactic acid bacteria.</title>
        <authorList>
            <person name="Makarova K.S."/>
            <person name="Slesarev A."/>
            <person name="Wolf Y.I."/>
            <person name="Sorokin A."/>
            <person name="Mirkin B."/>
            <person name="Koonin E.V."/>
            <person name="Pavlov A."/>
            <person name="Pavlova N."/>
            <person name="Karamychev V."/>
            <person name="Polouchine N."/>
            <person name="Shakhova V."/>
            <person name="Grigoriev I."/>
            <person name="Lou Y."/>
            <person name="Rohksar D."/>
            <person name="Lucas S."/>
            <person name="Huang K."/>
            <person name="Goodstein D.M."/>
            <person name="Hawkins T."/>
            <person name="Plengvidhya V."/>
            <person name="Welker D."/>
            <person name="Hughes J."/>
            <person name="Goh Y."/>
            <person name="Benson A."/>
            <person name="Baldwin K."/>
            <person name="Lee J.-H."/>
            <person name="Diaz-Muniz I."/>
            <person name="Dosti B."/>
            <person name="Smeianov V."/>
            <person name="Wechter W."/>
            <person name="Barabote R."/>
            <person name="Lorca G."/>
            <person name="Altermann E."/>
            <person name="Barrangou R."/>
            <person name="Ganesan B."/>
            <person name="Xie Y."/>
            <person name="Rawsthorne H."/>
            <person name="Tamir D."/>
            <person name="Parker C."/>
            <person name="Breidt F."/>
            <person name="Broadbent J.R."/>
            <person name="Hutkins R."/>
            <person name="O'Sullivan D."/>
            <person name="Steele J."/>
            <person name="Unlu G."/>
            <person name="Saier M.H. Jr."/>
            <person name="Klaenhammer T."/>
            <person name="Richardson P."/>
            <person name="Kozyavkin S."/>
            <person name="Weimer B.C."/>
            <person name="Mills D.A."/>
        </authorList>
    </citation>
    <scope>NUCLEOTIDE SEQUENCE [LARGE SCALE GENOMIC DNA]</scope>
    <source>
        <strain>ATCC 25745 / CCUG 21536 / LMG 10740 / 183-1w</strain>
    </source>
</reference>
<feature type="chain" id="PRO_1000008158" description="Thiamine-phosphate synthase">
    <location>
        <begin position="1"/>
        <end position="216"/>
    </location>
</feature>
<feature type="binding site" evidence="1">
    <location>
        <begin position="41"/>
        <end position="45"/>
    </location>
    <ligand>
        <name>4-amino-2-methyl-5-(diphosphooxymethyl)pyrimidine</name>
        <dbReference type="ChEBI" id="CHEBI:57841"/>
    </ligand>
</feature>
<feature type="binding site" evidence="1">
    <location>
        <position position="77"/>
    </location>
    <ligand>
        <name>4-amino-2-methyl-5-(diphosphooxymethyl)pyrimidine</name>
        <dbReference type="ChEBI" id="CHEBI:57841"/>
    </ligand>
</feature>
<feature type="binding site" evidence="1">
    <location>
        <position position="78"/>
    </location>
    <ligand>
        <name>Mg(2+)</name>
        <dbReference type="ChEBI" id="CHEBI:18420"/>
    </ligand>
</feature>
<feature type="binding site" evidence="1">
    <location>
        <position position="97"/>
    </location>
    <ligand>
        <name>Mg(2+)</name>
        <dbReference type="ChEBI" id="CHEBI:18420"/>
    </ligand>
</feature>
<feature type="binding site" evidence="1">
    <location>
        <position position="116"/>
    </location>
    <ligand>
        <name>4-amino-2-methyl-5-(diphosphooxymethyl)pyrimidine</name>
        <dbReference type="ChEBI" id="CHEBI:57841"/>
    </ligand>
</feature>
<feature type="binding site" evidence="1">
    <location>
        <begin position="143"/>
        <end position="145"/>
    </location>
    <ligand>
        <name>2-[(2R,5Z)-2-carboxy-4-methylthiazol-5(2H)-ylidene]ethyl phosphate</name>
        <dbReference type="ChEBI" id="CHEBI:62899"/>
    </ligand>
</feature>
<feature type="binding site" evidence="1">
    <location>
        <position position="146"/>
    </location>
    <ligand>
        <name>4-amino-2-methyl-5-(diphosphooxymethyl)pyrimidine</name>
        <dbReference type="ChEBI" id="CHEBI:57841"/>
    </ligand>
</feature>
<feature type="binding site" evidence="1">
    <location>
        <position position="174"/>
    </location>
    <ligand>
        <name>2-[(2R,5Z)-2-carboxy-4-methylthiazol-5(2H)-ylidene]ethyl phosphate</name>
        <dbReference type="ChEBI" id="CHEBI:62899"/>
    </ligand>
</feature>
<feature type="binding site" evidence="1">
    <location>
        <begin position="194"/>
        <end position="195"/>
    </location>
    <ligand>
        <name>2-[(2R,5Z)-2-carboxy-4-methylthiazol-5(2H)-ylidene]ethyl phosphate</name>
        <dbReference type="ChEBI" id="CHEBI:62899"/>
    </ligand>
</feature>
<name>THIE_PEDPA</name>
<sequence>MKFNSDMLKIYFVAGTQDVANKADFLPKVEEILQAGATAFQLREKGYNSIDNPAELTELAEKCHQLTQKYHVPLFIDDDVDLALAIHAEGIHVGQKDEKIESVLKRVQGSMIVGLSCNTEAQVKQANQLDGIDYLGTGTVFETTSKADAGAALGVAKLQELVELSHYPIVAIGGITLDNLPQTMATGVKGFAAISMFTQMTAVPTQMQKIKAIVKG</sequence>
<comment type="function">
    <text evidence="1">Condenses 4-methyl-5-(beta-hydroxyethyl)thiazole monophosphate (THZ-P) and 2-methyl-4-amino-5-hydroxymethyl pyrimidine pyrophosphate (HMP-PP) to form thiamine monophosphate (TMP).</text>
</comment>
<comment type="catalytic activity">
    <reaction evidence="1">
        <text>2-[(2R,5Z)-2-carboxy-4-methylthiazol-5(2H)-ylidene]ethyl phosphate + 4-amino-2-methyl-5-(diphosphooxymethyl)pyrimidine + 2 H(+) = thiamine phosphate + CO2 + diphosphate</text>
        <dbReference type="Rhea" id="RHEA:47844"/>
        <dbReference type="ChEBI" id="CHEBI:15378"/>
        <dbReference type="ChEBI" id="CHEBI:16526"/>
        <dbReference type="ChEBI" id="CHEBI:33019"/>
        <dbReference type="ChEBI" id="CHEBI:37575"/>
        <dbReference type="ChEBI" id="CHEBI:57841"/>
        <dbReference type="ChEBI" id="CHEBI:62899"/>
        <dbReference type="EC" id="2.5.1.3"/>
    </reaction>
</comment>
<comment type="catalytic activity">
    <reaction evidence="1">
        <text>2-(2-carboxy-4-methylthiazol-5-yl)ethyl phosphate + 4-amino-2-methyl-5-(diphosphooxymethyl)pyrimidine + 2 H(+) = thiamine phosphate + CO2 + diphosphate</text>
        <dbReference type="Rhea" id="RHEA:47848"/>
        <dbReference type="ChEBI" id="CHEBI:15378"/>
        <dbReference type="ChEBI" id="CHEBI:16526"/>
        <dbReference type="ChEBI" id="CHEBI:33019"/>
        <dbReference type="ChEBI" id="CHEBI:37575"/>
        <dbReference type="ChEBI" id="CHEBI:57841"/>
        <dbReference type="ChEBI" id="CHEBI:62890"/>
        <dbReference type="EC" id="2.5.1.3"/>
    </reaction>
</comment>
<comment type="catalytic activity">
    <reaction evidence="1">
        <text>4-methyl-5-(2-phosphooxyethyl)-thiazole + 4-amino-2-methyl-5-(diphosphooxymethyl)pyrimidine + H(+) = thiamine phosphate + diphosphate</text>
        <dbReference type="Rhea" id="RHEA:22328"/>
        <dbReference type="ChEBI" id="CHEBI:15378"/>
        <dbReference type="ChEBI" id="CHEBI:33019"/>
        <dbReference type="ChEBI" id="CHEBI:37575"/>
        <dbReference type="ChEBI" id="CHEBI:57841"/>
        <dbReference type="ChEBI" id="CHEBI:58296"/>
        <dbReference type="EC" id="2.5.1.3"/>
    </reaction>
</comment>
<comment type="cofactor">
    <cofactor evidence="1">
        <name>Mg(2+)</name>
        <dbReference type="ChEBI" id="CHEBI:18420"/>
    </cofactor>
    <text evidence="1">Binds 1 Mg(2+) ion per subunit.</text>
</comment>
<comment type="pathway">
    <text evidence="1">Cofactor biosynthesis; thiamine diphosphate biosynthesis; thiamine phosphate from 4-amino-2-methyl-5-diphosphomethylpyrimidine and 4-methyl-5-(2-phosphoethyl)-thiazole: step 1/1.</text>
</comment>
<comment type="similarity">
    <text evidence="1">Belongs to the thiamine-phosphate synthase family.</text>
</comment>
<organism>
    <name type="scientific">Pediococcus pentosaceus (strain ATCC 25745 / CCUG 21536 / LMG 10740 / 183-1w)</name>
    <dbReference type="NCBI Taxonomy" id="278197"/>
    <lineage>
        <taxon>Bacteria</taxon>
        <taxon>Bacillati</taxon>
        <taxon>Bacillota</taxon>
        <taxon>Bacilli</taxon>
        <taxon>Lactobacillales</taxon>
        <taxon>Lactobacillaceae</taxon>
        <taxon>Pediococcus</taxon>
    </lineage>
</organism>
<keyword id="KW-0460">Magnesium</keyword>
<keyword id="KW-0479">Metal-binding</keyword>
<keyword id="KW-0784">Thiamine biosynthesis</keyword>
<keyword id="KW-0808">Transferase</keyword>
<evidence type="ECO:0000255" key="1">
    <source>
        <dbReference type="HAMAP-Rule" id="MF_00097"/>
    </source>
</evidence>
<gene>
    <name evidence="1" type="primary">thiE</name>
    <name type="ordered locus">PEPE_0560</name>
</gene>
<dbReference type="EC" id="2.5.1.3" evidence="1"/>
<dbReference type="EMBL" id="CP000422">
    <property type="protein sequence ID" value="ABJ67648.1"/>
    <property type="molecule type" value="Genomic_DNA"/>
</dbReference>
<dbReference type="RefSeq" id="WP_011673146.1">
    <property type="nucleotide sequence ID" value="NC_008525.1"/>
</dbReference>
<dbReference type="SMR" id="Q03GM4"/>
<dbReference type="STRING" id="278197.PEPE_0560"/>
<dbReference type="GeneID" id="33061779"/>
<dbReference type="KEGG" id="ppe:PEPE_0560"/>
<dbReference type="eggNOG" id="COG0352">
    <property type="taxonomic scope" value="Bacteria"/>
</dbReference>
<dbReference type="HOGENOM" id="CLU_018272_3_2_9"/>
<dbReference type="OrthoDB" id="9812206at2"/>
<dbReference type="UniPathway" id="UPA00060">
    <property type="reaction ID" value="UER00141"/>
</dbReference>
<dbReference type="Proteomes" id="UP000000773">
    <property type="component" value="Chromosome"/>
</dbReference>
<dbReference type="GO" id="GO:0005737">
    <property type="term" value="C:cytoplasm"/>
    <property type="evidence" value="ECO:0007669"/>
    <property type="project" value="TreeGrafter"/>
</dbReference>
<dbReference type="GO" id="GO:0000287">
    <property type="term" value="F:magnesium ion binding"/>
    <property type="evidence" value="ECO:0007669"/>
    <property type="project" value="UniProtKB-UniRule"/>
</dbReference>
<dbReference type="GO" id="GO:0004789">
    <property type="term" value="F:thiamine-phosphate diphosphorylase activity"/>
    <property type="evidence" value="ECO:0007669"/>
    <property type="project" value="UniProtKB-UniRule"/>
</dbReference>
<dbReference type="GO" id="GO:0009228">
    <property type="term" value="P:thiamine biosynthetic process"/>
    <property type="evidence" value="ECO:0007669"/>
    <property type="project" value="UniProtKB-KW"/>
</dbReference>
<dbReference type="GO" id="GO:0009229">
    <property type="term" value="P:thiamine diphosphate biosynthetic process"/>
    <property type="evidence" value="ECO:0007669"/>
    <property type="project" value="UniProtKB-UniRule"/>
</dbReference>
<dbReference type="CDD" id="cd00564">
    <property type="entry name" value="TMP_TenI"/>
    <property type="match status" value="1"/>
</dbReference>
<dbReference type="FunFam" id="3.20.20.70:FF:000096">
    <property type="entry name" value="Thiamine-phosphate synthase"/>
    <property type="match status" value="1"/>
</dbReference>
<dbReference type="Gene3D" id="3.20.20.70">
    <property type="entry name" value="Aldolase class I"/>
    <property type="match status" value="1"/>
</dbReference>
<dbReference type="HAMAP" id="MF_00097">
    <property type="entry name" value="TMP_synthase"/>
    <property type="match status" value="1"/>
</dbReference>
<dbReference type="InterPro" id="IPR013785">
    <property type="entry name" value="Aldolase_TIM"/>
</dbReference>
<dbReference type="InterPro" id="IPR036206">
    <property type="entry name" value="ThiamineP_synth_sf"/>
</dbReference>
<dbReference type="InterPro" id="IPR022998">
    <property type="entry name" value="ThiamineP_synth_TenI"/>
</dbReference>
<dbReference type="InterPro" id="IPR034291">
    <property type="entry name" value="TMP_synthase"/>
</dbReference>
<dbReference type="NCBIfam" id="TIGR00693">
    <property type="entry name" value="thiE"/>
    <property type="match status" value="1"/>
</dbReference>
<dbReference type="PANTHER" id="PTHR20857">
    <property type="entry name" value="THIAMINE-PHOSPHATE PYROPHOSPHORYLASE"/>
    <property type="match status" value="1"/>
</dbReference>
<dbReference type="PANTHER" id="PTHR20857:SF15">
    <property type="entry name" value="THIAMINE-PHOSPHATE SYNTHASE"/>
    <property type="match status" value="1"/>
</dbReference>
<dbReference type="Pfam" id="PF02581">
    <property type="entry name" value="TMP-TENI"/>
    <property type="match status" value="1"/>
</dbReference>
<dbReference type="SUPFAM" id="SSF51391">
    <property type="entry name" value="Thiamin phosphate synthase"/>
    <property type="match status" value="1"/>
</dbReference>
<accession>Q03GM4</accession>
<proteinExistence type="inferred from homology"/>